<gene>
    <name evidence="1" type="primary">queF</name>
    <name type="ordered locus">CT1638</name>
</gene>
<comment type="function">
    <text evidence="1">Catalyzes the NADPH-dependent reduction of 7-cyano-7-deazaguanine (preQ0) to 7-aminomethyl-7-deazaguanine (preQ1).</text>
</comment>
<comment type="catalytic activity">
    <reaction evidence="1">
        <text>7-aminomethyl-7-carbaguanine + 2 NADP(+) = 7-cyano-7-deazaguanine + 2 NADPH + 3 H(+)</text>
        <dbReference type="Rhea" id="RHEA:13409"/>
        <dbReference type="ChEBI" id="CHEBI:15378"/>
        <dbReference type="ChEBI" id="CHEBI:45075"/>
        <dbReference type="ChEBI" id="CHEBI:57783"/>
        <dbReference type="ChEBI" id="CHEBI:58349"/>
        <dbReference type="ChEBI" id="CHEBI:58703"/>
        <dbReference type="EC" id="1.7.1.13"/>
    </reaction>
</comment>
<comment type="pathway">
    <text evidence="1">tRNA modification; tRNA-queuosine biosynthesis.</text>
</comment>
<comment type="subcellular location">
    <subcellularLocation>
        <location evidence="1">Cytoplasm</location>
    </subcellularLocation>
</comment>
<comment type="similarity">
    <text evidence="1">Belongs to the GTP cyclohydrolase I family. QueF type 1 subfamily.</text>
</comment>
<reference key="1">
    <citation type="journal article" date="2000" name="Science">
        <title>Molecular evidence for the early evolution of photosynthesis.</title>
        <authorList>
            <person name="Xiong J."/>
            <person name="Fischer W.M."/>
            <person name="Inoue K."/>
            <person name="Nakahara M."/>
            <person name="Bauer C.E."/>
        </authorList>
    </citation>
    <scope>NUCLEOTIDE SEQUENCE [GENOMIC DNA]</scope>
    <source>
        <strain>ATCC 49652 / DSM 12025 / NBRC 103806 / TLS</strain>
    </source>
</reference>
<reference key="2">
    <citation type="journal article" date="2002" name="Proc. Natl. Acad. Sci. U.S.A.">
        <title>The complete genome sequence of Chlorobium tepidum TLS, a photosynthetic, anaerobic, green-sulfur bacterium.</title>
        <authorList>
            <person name="Eisen J.A."/>
            <person name="Nelson K.E."/>
            <person name="Paulsen I.T."/>
            <person name="Heidelberg J.F."/>
            <person name="Wu M."/>
            <person name="Dodson R.J."/>
            <person name="DeBoy R.T."/>
            <person name="Gwinn M.L."/>
            <person name="Nelson W.C."/>
            <person name="Haft D.H."/>
            <person name="Hickey E.K."/>
            <person name="Peterson J.D."/>
            <person name="Durkin A.S."/>
            <person name="Kolonay J.F."/>
            <person name="Yang F."/>
            <person name="Holt I.E."/>
            <person name="Umayam L.A."/>
            <person name="Mason T.M."/>
            <person name="Brenner M."/>
            <person name="Shea T.P."/>
            <person name="Parksey D.S."/>
            <person name="Nierman W.C."/>
            <person name="Feldblyum T.V."/>
            <person name="Hansen C.L."/>
            <person name="Craven M.B."/>
            <person name="Radune D."/>
            <person name="Vamathevan J.J."/>
            <person name="Khouri H.M."/>
            <person name="White O."/>
            <person name="Gruber T.M."/>
            <person name="Ketchum K.A."/>
            <person name="Venter J.C."/>
            <person name="Tettelin H."/>
            <person name="Bryant D.A."/>
            <person name="Fraser C.M."/>
        </authorList>
    </citation>
    <scope>NUCLEOTIDE SEQUENCE [LARGE SCALE GENOMIC DNA]</scope>
    <source>
        <strain>ATCC 49652 / DSM 12025 / NBRC 103806 / TLS</strain>
    </source>
</reference>
<organism>
    <name type="scientific">Chlorobaculum tepidum (strain ATCC 49652 / DSM 12025 / NBRC 103806 / TLS)</name>
    <name type="common">Chlorobium tepidum</name>
    <dbReference type="NCBI Taxonomy" id="194439"/>
    <lineage>
        <taxon>Bacteria</taxon>
        <taxon>Pseudomonadati</taxon>
        <taxon>Chlorobiota</taxon>
        <taxon>Chlorobiia</taxon>
        <taxon>Chlorobiales</taxon>
        <taxon>Chlorobiaceae</taxon>
        <taxon>Chlorobaculum</taxon>
    </lineage>
</organism>
<keyword id="KW-0963">Cytoplasm</keyword>
<keyword id="KW-0521">NADP</keyword>
<keyword id="KW-0560">Oxidoreductase</keyword>
<keyword id="KW-0671">Queuosine biosynthesis</keyword>
<keyword id="KW-1185">Reference proteome</keyword>
<accession>Q9F719</accession>
<accession>Q7CLI8</accession>
<sequence length="117" mass="13564">MNKEIIEVFDNTYPDRDYTIEIINPEFTSVCPKTGLPDFGTITVNYVPDKSCIELKSLKYYFLEFRNAGIFYENITNRILDDLVEACQPRRMTVKTEWNARGGITETVTVSYSKSKE</sequence>
<name>QUEF_CHLTE</name>
<evidence type="ECO:0000255" key="1">
    <source>
        <dbReference type="HAMAP-Rule" id="MF_00818"/>
    </source>
</evidence>
<protein>
    <recommendedName>
        <fullName evidence="1">NADPH-dependent 7-cyano-7-deazaguanine reductase</fullName>
        <ecNumber evidence="1">1.7.1.13</ecNumber>
    </recommendedName>
    <alternativeName>
        <fullName evidence="1">7-cyano-7-carbaguanine reductase</fullName>
    </alternativeName>
    <alternativeName>
        <fullName evidence="1">NADPH-dependent nitrile oxidoreductase</fullName>
    </alternativeName>
    <alternativeName>
        <fullName evidence="1">PreQ(0) reductase</fullName>
    </alternativeName>
</protein>
<proteinExistence type="inferred from homology"/>
<dbReference type="EC" id="1.7.1.13" evidence="1"/>
<dbReference type="EMBL" id="AF287481">
    <property type="protein sequence ID" value="AAG12198.1"/>
    <property type="molecule type" value="Genomic_DNA"/>
</dbReference>
<dbReference type="EMBL" id="AE006470">
    <property type="protein sequence ID" value="AAM72863.1"/>
    <property type="molecule type" value="Genomic_DNA"/>
</dbReference>
<dbReference type="RefSeq" id="NP_662521.1">
    <property type="nucleotide sequence ID" value="NC_002932.3"/>
</dbReference>
<dbReference type="RefSeq" id="WP_010933302.1">
    <property type="nucleotide sequence ID" value="NC_002932.3"/>
</dbReference>
<dbReference type="SMR" id="Q9F719"/>
<dbReference type="STRING" id="194439.CT1638"/>
<dbReference type="EnsemblBacteria" id="AAM72863">
    <property type="protein sequence ID" value="AAM72863"/>
    <property type="gene ID" value="CT1638"/>
</dbReference>
<dbReference type="KEGG" id="cte:CT1638"/>
<dbReference type="PATRIC" id="fig|194439.7.peg.1481"/>
<dbReference type="eggNOG" id="COG0780">
    <property type="taxonomic scope" value="Bacteria"/>
</dbReference>
<dbReference type="HOGENOM" id="CLU_102489_1_0_10"/>
<dbReference type="OrthoDB" id="9795077at2"/>
<dbReference type="UniPathway" id="UPA00392"/>
<dbReference type="Proteomes" id="UP000001007">
    <property type="component" value="Chromosome"/>
</dbReference>
<dbReference type="GO" id="GO:0005737">
    <property type="term" value="C:cytoplasm"/>
    <property type="evidence" value="ECO:0007669"/>
    <property type="project" value="UniProtKB-SubCell"/>
</dbReference>
<dbReference type="GO" id="GO:0033739">
    <property type="term" value="F:preQ1 synthase activity"/>
    <property type="evidence" value="ECO:0007669"/>
    <property type="project" value="UniProtKB-UniRule"/>
</dbReference>
<dbReference type="GO" id="GO:0008616">
    <property type="term" value="P:queuosine biosynthetic process"/>
    <property type="evidence" value="ECO:0007669"/>
    <property type="project" value="UniProtKB-UniRule"/>
</dbReference>
<dbReference type="GO" id="GO:0006400">
    <property type="term" value="P:tRNA modification"/>
    <property type="evidence" value="ECO:0007669"/>
    <property type="project" value="UniProtKB-UniRule"/>
</dbReference>
<dbReference type="Gene3D" id="3.30.1130.10">
    <property type="match status" value="1"/>
</dbReference>
<dbReference type="HAMAP" id="MF_00818">
    <property type="entry name" value="QueF_type1"/>
    <property type="match status" value="1"/>
</dbReference>
<dbReference type="InterPro" id="IPR043133">
    <property type="entry name" value="GTP-CH-I_C/QueF"/>
</dbReference>
<dbReference type="InterPro" id="IPR050084">
    <property type="entry name" value="NADPH_dep_7-cyano-7-deazaG_red"/>
</dbReference>
<dbReference type="InterPro" id="IPR029500">
    <property type="entry name" value="QueF"/>
</dbReference>
<dbReference type="InterPro" id="IPR016856">
    <property type="entry name" value="QueF_type1"/>
</dbReference>
<dbReference type="NCBIfam" id="TIGR03139">
    <property type="entry name" value="QueF-II"/>
    <property type="match status" value="1"/>
</dbReference>
<dbReference type="PANTHER" id="PTHR34354">
    <property type="entry name" value="NADPH-DEPENDENT 7-CYANO-7-DEAZAGUANINE REDUCTASE"/>
    <property type="match status" value="1"/>
</dbReference>
<dbReference type="PANTHER" id="PTHR34354:SF1">
    <property type="entry name" value="NADPH-DEPENDENT 7-CYANO-7-DEAZAGUANINE REDUCTASE"/>
    <property type="match status" value="1"/>
</dbReference>
<dbReference type="Pfam" id="PF14489">
    <property type="entry name" value="QueF"/>
    <property type="match status" value="1"/>
</dbReference>
<dbReference type="PIRSF" id="PIRSF027377">
    <property type="entry name" value="Nitrile_oxidored_QueF"/>
    <property type="match status" value="1"/>
</dbReference>
<dbReference type="SUPFAM" id="SSF55620">
    <property type="entry name" value="Tetrahydrobiopterin biosynthesis enzymes-like"/>
    <property type="match status" value="1"/>
</dbReference>
<feature type="chain" id="PRO_0000162970" description="NADPH-dependent 7-cyano-7-deazaguanine reductase">
    <location>
        <begin position="1"/>
        <end position="117"/>
    </location>
</feature>
<feature type="active site" description="Thioimide intermediate" evidence="1">
    <location>
        <position position="31"/>
    </location>
</feature>
<feature type="active site" description="Proton donor" evidence="1">
    <location>
        <position position="38"/>
    </location>
</feature>
<feature type="binding site" evidence="1">
    <location>
        <begin position="53"/>
        <end position="55"/>
    </location>
    <ligand>
        <name>substrate</name>
    </ligand>
</feature>
<feature type="binding site" evidence="1">
    <location>
        <begin position="72"/>
        <end position="73"/>
    </location>
    <ligand>
        <name>substrate</name>
    </ligand>
</feature>